<reference key="1">
    <citation type="journal article" date="2006" name="Genome Res.">
        <title>Massive genome erosion and functional adaptations provide insights into the symbiotic lifestyle of Sodalis glossinidius in the tsetse host.</title>
        <authorList>
            <person name="Toh H."/>
            <person name="Weiss B.L."/>
            <person name="Perkin S.A.H."/>
            <person name="Yamashita A."/>
            <person name="Oshima K."/>
            <person name="Hattori M."/>
            <person name="Aksoy S."/>
        </authorList>
    </citation>
    <scope>NUCLEOTIDE SEQUENCE [LARGE SCALE GENOMIC DNA]</scope>
    <source>
        <strain>morsitans</strain>
    </source>
</reference>
<gene>
    <name evidence="1" type="primary">glnS</name>
    <name type="ordered locus">SG0860</name>
</gene>
<proteinExistence type="inferred from homology"/>
<protein>
    <recommendedName>
        <fullName evidence="1">Glutamine--tRNA ligase</fullName>
        <ecNumber evidence="1">6.1.1.18</ecNumber>
    </recommendedName>
    <alternativeName>
        <fullName evidence="1">Glutaminyl-tRNA synthetase</fullName>
        <shortName evidence="1">GlnRS</shortName>
    </alternativeName>
</protein>
<name>SYQ_SODGM</name>
<dbReference type="EC" id="6.1.1.18" evidence="1"/>
<dbReference type="EMBL" id="AP008232">
    <property type="protein sequence ID" value="BAE74135.1"/>
    <property type="molecule type" value="Genomic_DNA"/>
</dbReference>
<dbReference type="RefSeq" id="WP_011410697.1">
    <property type="nucleotide sequence ID" value="NC_007712.1"/>
</dbReference>
<dbReference type="SMR" id="Q2NUP0"/>
<dbReference type="STRING" id="343509.SG0860"/>
<dbReference type="KEGG" id="sgl:SG0860"/>
<dbReference type="eggNOG" id="COG0008">
    <property type="taxonomic scope" value="Bacteria"/>
</dbReference>
<dbReference type="HOGENOM" id="CLU_001882_2_3_6"/>
<dbReference type="OrthoDB" id="9801560at2"/>
<dbReference type="BioCyc" id="SGLO343509:SGP1_RS07430-MONOMER"/>
<dbReference type="Proteomes" id="UP000001932">
    <property type="component" value="Chromosome"/>
</dbReference>
<dbReference type="GO" id="GO:0005829">
    <property type="term" value="C:cytosol"/>
    <property type="evidence" value="ECO:0007669"/>
    <property type="project" value="TreeGrafter"/>
</dbReference>
<dbReference type="GO" id="GO:0005524">
    <property type="term" value="F:ATP binding"/>
    <property type="evidence" value="ECO:0007669"/>
    <property type="project" value="UniProtKB-UniRule"/>
</dbReference>
<dbReference type="GO" id="GO:0004819">
    <property type="term" value="F:glutamine-tRNA ligase activity"/>
    <property type="evidence" value="ECO:0007669"/>
    <property type="project" value="UniProtKB-UniRule"/>
</dbReference>
<dbReference type="GO" id="GO:0006425">
    <property type="term" value="P:glutaminyl-tRNA aminoacylation"/>
    <property type="evidence" value="ECO:0007669"/>
    <property type="project" value="InterPro"/>
</dbReference>
<dbReference type="GO" id="GO:0006424">
    <property type="term" value="P:glutamyl-tRNA aminoacylation"/>
    <property type="evidence" value="ECO:0007669"/>
    <property type="project" value="UniProtKB-UniRule"/>
</dbReference>
<dbReference type="CDD" id="cd00807">
    <property type="entry name" value="GlnRS_core"/>
    <property type="match status" value="1"/>
</dbReference>
<dbReference type="FunFam" id="1.10.1160.10:FF:000001">
    <property type="entry name" value="Glutamine--tRNA ligase"/>
    <property type="match status" value="1"/>
</dbReference>
<dbReference type="FunFam" id="2.40.240.10:FF:000001">
    <property type="entry name" value="Glutamine--tRNA ligase"/>
    <property type="match status" value="1"/>
</dbReference>
<dbReference type="FunFam" id="3.90.800.10:FF:000001">
    <property type="entry name" value="Glutamine--tRNA ligase"/>
    <property type="match status" value="1"/>
</dbReference>
<dbReference type="FunFam" id="3.40.50.620:FF:000037">
    <property type="entry name" value="Glutamine--tRNA ligase cytoplasmic"/>
    <property type="match status" value="1"/>
</dbReference>
<dbReference type="Gene3D" id="1.10.1160.10">
    <property type="entry name" value="Glutamyl-trna Synthetase, Domain 2"/>
    <property type="match status" value="1"/>
</dbReference>
<dbReference type="Gene3D" id="3.90.800.10">
    <property type="entry name" value="Glutamyl-tRNA Synthetase, Domain 3"/>
    <property type="match status" value="1"/>
</dbReference>
<dbReference type="Gene3D" id="3.40.50.620">
    <property type="entry name" value="HUPs"/>
    <property type="match status" value="1"/>
</dbReference>
<dbReference type="Gene3D" id="2.40.240.10">
    <property type="entry name" value="Ribosomal Protein L25, Chain P"/>
    <property type="match status" value="2"/>
</dbReference>
<dbReference type="HAMAP" id="MF_00126">
    <property type="entry name" value="Gln_tRNA_synth"/>
    <property type="match status" value="1"/>
</dbReference>
<dbReference type="InterPro" id="IPR001412">
    <property type="entry name" value="aa-tRNA-synth_I_CS"/>
</dbReference>
<dbReference type="InterPro" id="IPR004514">
    <property type="entry name" value="Gln-tRNA-synth"/>
</dbReference>
<dbReference type="InterPro" id="IPR050132">
    <property type="entry name" value="Gln/Glu-tRNA_Ligase"/>
</dbReference>
<dbReference type="InterPro" id="IPR022861">
    <property type="entry name" value="Gln_tRNA_ligase_bac"/>
</dbReference>
<dbReference type="InterPro" id="IPR000924">
    <property type="entry name" value="Glu/Gln-tRNA-synth"/>
</dbReference>
<dbReference type="InterPro" id="IPR020058">
    <property type="entry name" value="Glu/Gln-tRNA-synth_Ib_cat-dom"/>
</dbReference>
<dbReference type="InterPro" id="IPR020059">
    <property type="entry name" value="Glu/Gln-tRNA-synth_Ib_codon-bd"/>
</dbReference>
<dbReference type="InterPro" id="IPR020061">
    <property type="entry name" value="Glu_tRNA_lig_a-bdl"/>
</dbReference>
<dbReference type="InterPro" id="IPR020056">
    <property type="entry name" value="Rbsml_bL25/Gln-tRNA_synth_N"/>
</dbReference>
<dbReference type="InterPro" id="IPR011035">
    <property type="entry name" value="Ribosomal_bL25/Gln-tRNA_synth"/>
</dbReference>
<dbReference type="InterPro" id="IPR014729">
    <property type="entry name" value="Rossmann-like_a/b/a_fold"/>
</dbReference>
<dbReference type="InterPro" id="IPR049437">
    <property type="entry name" value="tRNA-synt_1c_C2"/>
</dbReference>
<dbReference type="NCBIfam" id="TIGR00440">
    <property type="entry name" value="glnS"/>
    <property type="match status" value="1"/>
</dbReference>
<dbReference type="NCBIfam" id="NF011291">
    <property type="entry name" value="PRK14703.1"/>
    <property type="match status" value="1"/>
</dbReference>
<dbReference type="PANTHER" id="PTHR43097:SF5">
    <property type="entry name" value="GLUTAMATE--TRNA LIGASE"/>
    <property type="match status" value="1"/>
</dbReference>
<dbReference type="PANTHER" id="PTHR43097">
    <property type="entry name" value="GLUTAMINE-TRNA LIGASE"/>
    <property type="match status" value="1"/>
</dbReference>
<dbReference type="Pfam" id="PF00749">
    <property type="entry name" value="tRNA-synt_1c"/>
    <property type="match status" value="1"/>
</dbReference>
<dbReference type="Pfam" id="PF03950">
    <property type="entry name" value="tRNA-synt_1c_C"/>
    <property type="match status" value="1"/>
</dbReference>
<dbReference type="Pfam" id="PF20974">
    <property type="entry name" value="tRNA-synt_1c_C2"/>
    <property type="match status" value="1"/>
</dbReference>
<dbReference type="PRINTS" id="PR00987">
    <property type="entry name" value="TRNASYNTHGLU"/>
</dbReference>
<dbReference type="SUPFAM" id="SSF52374">
    <property type="entry name" value="Nucleotidylyl transferase"/>
    <property type="match status" value="1"/>
</dbReference>
<dbReference type="SUPFAM" id="SSF50715">
    <property type="entry name" value="Ribosomal protein L25-like"/>
    <property type="match status" value="1"/>
</dbReference>
<dbReference type="PROSITE" id="PS00178">
    <property type="entry name" value="AA_TRNA_LIGASE_I"/>
    <property type="match status" value="1"/>
</dbReference>
<comment type="catalytic activity">
    <reaction evidence="1">
        <text>tRNA(Gln) + L-glutamine + ATP = L-glutaminyl-tRNA(Gln) + AMP + diphosphate</text>
        <dbReference type="Rhea" id="RHEA:20121"/>
        <dbReference type="Rhea" id="RHEA-COMP:9662"/>
        <dbReference type="Rhea" id="RHEA-COMP:9681"/>
        <dbReference type="ChEBI" id="CHEBI:30616"/>
        <dbReference type="ChEBI" id="CHEBI:33019"/>
        <dbReference type="ChEBI" id="CHEBI:58359"/>
        <dbReference type="ChEBI" id="CHEBI:78442"/>
        <dbReference type="ChEBI" id="CHEBI:78521"/>
        <dbReference type="ChEBI" id="CHEBI:456215"/>
        <dbReference type="EC" id="6.1.1.18"/>
    </reaction>
</comment>
<comment type="subunit">
    <text evidence="1">Monomer.</text>
</comment>
<comment type="subcellular location">
    <subcellularLocation>
        <location evidence="1">Cytoplasm</location>
    </subcellularLocation>
</comment>
<comment type="similarity">
    <text evidence="1">Belongs to the class-I aminoacyl-tRNA synthetase family.</text>
</comment>
<keyword id="KW-0030">Aminoacyl-tRNA synthetase</keyword>
<keyword id="KW-0067">ATP-binding</keyword>
<keyword id="KW-0963">Cytoplasm</keyword>
<keyword id="KW-0436">Ligase</keyword>
<keyword id="KW-0547">Nucleotide-binding</keyword>
<keyword id="KW-0648">Protein biosynthesis</keyword>
<evidence type="ECO:0000255" key="1">
    <source>
        <dbReference type="HAMAP-Rule" id="MF_00126"/>
    </source>
</evidence>
<sequence>MSEAEARPTNFIRQIIDDDLASGKHTSVHTRFPPEPNGYLHIGHAKSIYLNFGIAQDYQGQCNLRFDDTNPVKEDMEYVDSIKHDVQWLGFNWSGDIHYSSDYFDKLHDYALELIDKGLAYVDQLSPDQIRDYRGTLTRPGKNSPYRDRSVEENRALFASMRQGEFAEGSACLRAKIDMASPFMVMRDPVLYRIKFADHHQTGSKWCIYPMYDFTHCISDALEGITHSLCTLEFQDNRRLYDWVLDNITINVHPRQYEFSRLNLEYAIMSKRKLNLLVTEKIVEGWDDPRMPTISGLRRRGYTAASIREFCRRIGVTKQDNNVEMAALEACIREDLNDRAPRAMAVIDPVRVVIESLPMGYEQDIAMPNHPNRPEMGTRQVAFSREIYIDRADFREEANKQYKRLVLGKEVRLRNAFVIKAEHVEKDPQGQITTIFCRHDPDTLSKDPADGRKVKGVIHWVSANRSLAAEFRLYDRLFSEANPAAAEDFLSTLNPDSLVIRQGFVEAGVPAANTGEPFQFEREGYFCADSRYFSPTHPVFNRTVGLRDTWAQRAAM</sequence>
<feature type="chain" id="PRO_0000242878" description="Glutamine--tRNA ligase">
    <location>
        <begin position="1"/>
        <end position="556"/>
    </location>
</feature>
<feature type="short sequence motif" description="'HIGH' region" evidence="1">
    <location>
        <begin position="34"/>
        <end position="44"/>
    </location>
</feature>
<feature type="short sequence motif" description="'KMSKS' region" evidence="1">
    <location>
        <begin position="268"/>
        <end position="272"/>
    </location>
</feature>
<feature type="binding site" evidence="1">
    <location>
        <begin position="35"/>
        <end position="37"/>
    </location>
    <ligand>
        <name>ATP</name>
        <dbReference type="ChEBI" id="CHEBI:30616"/>
    </ligand>
</feature>
<feature type="binding site" evidence="1">
    <location>
        <begin position="41"/>
        <end position="47"/>
    </location>
    <ligand>
        <name>ATP</name>
        <dbReference type="ChEBI" id="CHEBI:30616"/>
    </ligand>
</feature>
<feature type="binding site" evidence="1">
    <location>
        <position position="67"/>
    </location>
    <ligand>
        <name>L-glutamine</name>
        <dbReference type="ChEBI" id="CHEBI:58359"/>
    </ligand>
</feature>
<feature type="binding site" evidence="1">
    <location>
        <position position="212"/>
    </location>
    <ligand>
        <name>L-glutamine</name>
        <dbReference type="ChEBI" id="CHEBI:58359"/>
    </ligand>
</feature>
<feature type="binding site" evidence="1">
    <location>
        <position position="231"/>
    </location>
    <ligand>
        <name>ATP</name>
        <dbReference type="ChEBI" id="CHEBI:30616"/>
    </ligand>
</feature>
<feature type="binding site" evidence="1">
    <location>
        <begin position="261"/>
        <end position="262"/>
    </location>
    <ligand>
        <name>ATP</name>
        <dbReference type="ChEBI" id="CHEBI:30616"/>
    </ligand>
</feature>
<feature type="binding site" evidence="1">
    <location>
        <begin position="269"/>
        <end position="271"/>
    </location>
    <ligand>
        <name>ATP</name>
        <dbReference type="ChEBI" id="CHEBI:30616"/>
    </ligand>
</feature>
<accession>Q2NUP0</accession>
<organism>
    <name type="scientific">Sodalis glossinidius (strain morsitans)</name>
    <dbReference type="NCBI Taxonomy" id="343509"/>
    <lineage>
        <taxon>Bacteria</taxon>
        <taxon>Pseudomonadati</taxon>
        <taxon>Pseudomonadota</taxon>
        <taxon>Gammaproteobacteria</taxon>
        <taxon>Enterobacterales</taxon>
        <taxon>Bruguierivoracaceae</taxon>
        <taxon>Sodalis</taxon>
    </lineage>
</organism>